<reference key="1">
    <citation type="journal article" date="2006" name="Proc. Natl. Acad. Sci. U.S.A.">
        <title>Molecular genetic anatomy of inter- and intraserotype variation in the human bacterial pathogen group A Streptococcus.</title>
        <authorList>
            <person name="Beres S.B."/>
            <person name="Richter E.W."/>
            <person name="Nagiec M.J."/>
            <person name="Sumby P."/>
            <person name="Porcella S.F."/>
            <person name="DeLeo F.R."/>
            <person name="Musser J.M."/>
        </authorList>
    </citation>
    <scope>NUCLEOTIDE SEQUENCE [LARGE SCALE GENOMIC DNA]</scope>
    <source>
        <strain>MGAS2096</strain>
    </source>
</reference>
<protein>
    <recommendedName>
        <fullName evidence="1">DNA polymerase IV</fullName>
        <shortName evidence="1">Pol IV</shortName>
        <ecNumber evidence="1">2.7.7.7</ecNumber>
    </recommendedName>
</protein>
<comment type="function">
    <text evidence="1">Poorly processive, error-prone DNA polymerase involved in untargeted mutagenesis. Copies undamaged DNA at stalled replication forks, which arise in vivo from mismatched or misaligned primer ends. These misaligned primers can be extended by PolIV. Exhibits no 3'-5' exonuclease (proofreading) activity. May be involved in translesional synthesis, in conjunction with the beta clamp from PolIII.</text>
</comment>
<comment type="catalytic activity">
    <reaction evidence="1">
        <text>DNA(n) + a 2'-deoxyribonucleoside 5'-triphosphate = DNA(n+1) + diphosphate</text>
        <dbReference type="Rhea" id="RHEA:22508"/>
        <dbReference type="Rhea" id="RHEA-COMP:17339"/>
        <dbReference type="Rhea" id="RHEA-COMP:17340"/>
        <dbReference type="ChEBI" id="CHEBI:33019"/>
        <dbReference type="ChEBI" id="CHEBI:61560"/>
        <dbReference type="ChEBI" id="CHEBI:173112"/>
        <dbReference type="EC" id="2.7.7.7"/>
    </reaction>
</comment>
<comment type="cofactor">
    <cofactor evidence="1">
        <name>Mg(2+)</name>
        <dbReference type="ChEBI" id="CHEBI:18420"/>
    </cofactor>
    <text evidence="1">Binds 2 magnesium ions per subunit.</text>
</comment>
<comment type="subunit">
    <text evidence="1">Monomer.</text>
</comment>
<comment type="subcellular location">
    <subcellularLocation>
        <location evidence="1">Cytoplasm</location>
    </subcellularLocation>
</comment>
<comment type="similarity">
    <text evidence="1">Belongs to the DNA polymerase type-Y family.</text>
</comment>
<dbReference type="EC" id="2.7.7.7" evidence="1"/>
<dbReference type="EMBL" id="CP000261">
    <property type="protein sequence ID" value="ABF36645.1"/>
    <property type="molecule type" value="Genomic_DNA"/>
</dbReference>
<dbReference type="SMR" id="Q1JA16"/>
<dbReference type="KEGG" id="spj:MGAS2096_Spy1593"/>
<dbReference type="HOGENOM" id="CLU_012348_1_2_9"/>
<dbReference type="GO" id="GO:0005829">
    <property type="term" value="C:cytosol"/>
    <property type="evidence" value="ECO:0007669"/>
    <property type="project" value="TreeGrafter"/>
</dbReference>
<dbReference type="GO" id="GO:0003684">
    <property type="term" value="F:damaged DNA binding"/>
    <property type="evidence" value="ECO:0007669"/>
    <property type="project" value="InterPro"/>
</dbReference>
<dbReference type="GO" id="GO:0003887">
    <property type="term" value="F:DNA-directed DNA polymerase activity"/>
    <property type="evidence" value="ECO:0007669"/>
    <property type="project" value="UniProtKB-UniRule"/>
</dbReference>
<dbReference type="GO" id="GO:0000287">
    <property type="term" value="F:magnesium ion binding"/>
    <property type="evidence" value="ECO:0007669"/>
    <property type="project" value="UniProtKB-UniRule"/>
</dbReference>
<dbReference type="GO" id="GO:0006261">
    <property type="term" value="P:DNA-templated DNA replication"/>
    <property type="evidence" value="ECO:0007669"/>
    <property type="project" value="UniProtKB-UniRule"/>
</dbReference>
<dbReference type="GO" id="GO:0042276">
    <property type="term" value="P:error-prone translesion synthesis"/>
    <property type="evidence" value="ECO:0007669"/>
    <property type="project" value="TreeGrafter"/>
</dbReference>
<dbReference type="GO" id="GO:0009432">
    <property type="term" value="P:SOS response"/>
    <property type="evidence" value="ECO:0007669"/>
    <property type="project" value="TreeGrafter"/>
</dbReference>
<dbReference type="CDD" id="cd03586">
    <property type="entry name" value="PolY_Pol_IV_kappa"/>
    <property type="match status" value="1"/>
</dbReference>
<dbReference type="FunFam" id="3.30.1490.100:FF:000004">
    <property type="entry name" value="DNA polymerase IV"/>
    <property type="match status" value="1"/>
</dbReference>
<dbReference type="FunFam" id="3.40.1170.60:FF:000001">
    <property type="entry name" value="DNA polymerase IV"/>
    <property type="match status" value="1"/>
</dbReference>
<dbReference type="Gene3D" id="3.30.70.270">
    <property type="match status" value="1"/>
</dbReference>
<dbReference type="Gene3D" id="3.40.1170.60">
    <property type="match status" value="1"/>
</dbReference>
<dbReference type="Gene3D" id="1.10.150.20">
    <property type="entry name" value="5' to 3' exonuclease, C-terminal subdomain"/>
    <property type="match status" value="1"/>
</dbReference>
<dbReference type="Gene3D" id="3.30.1490.100">
    <property type="entry name" value="DNA polymerase, Y-family, little finger domain"/>
    <property type="match status" value="1"/>
</dbReference>
<dbReference type="HAMAP" id="MF_01113">
    <property type="entry name" value="DNApol_IV"/>
    <property type="match status" value="1"/>
</dbReference>
<dbReference type="InterPro" id="IPR043502">
    <property type="entry name" value="DNA/RNA_pol_sf"/>
</dbReference>
<dbReference type="InterPro" id="IPR036775">
    <property type="entry name" value="DNA_pol_Y-fam_lit_finger_sf"/>
</dbReference>
<dbReference type="InterPro" id="IPR017961">
    <property type="entry name" value="DNA_pol_Y-fam_little_finger"/>
</dbReference>
<dbReference type="InterPro" id="IPR050116">
    <property type="entry name" value="DNA_polymerase-Y"/>
</dbReference>
<dbReference type="InterPro" id="IPR022880">
    <property type="entry name" value="DNApol_IV"/>
</dbReference>
<dbReference type="InterPro" id="IPR024728">
    <property type="entry name" value="PolY_HhH_motif"/>
</dbReference>
<dbReference type="InterPro" id="IPR043128">
    <property type="entry name" value="Rev_trsase/Diguanyl_cyclase"/>
</dbReference>
<dbReference type="InterPro" id="IPR001126">
    <property type="entry name" value="UmuC"/>
</dbReference>
<dbReference type="NCBIfam" id="NF002677">
    <property type="entry name" value="PRK02406.1"/>
    <property type="match status" value="1"/>
</dbReference>
<dbReference type="PANTHER" id="PTHR11076:SF33">
    <property type="entry name" value="DNA POLYMERASE KAPPA"/>
    <property type="match status" value="1"/>
</dbReference>
<dbReference type="PANTHER" id="PTHR11076">
    <property type="entry name" value="DNA REPAIR POLYMERASE UMUC / TRANSFERASE FAMILY MEMBER"/>
    <property type="match status" value="1"/>
</dbReference>
<dbReference type="Pfam" id="PF00817">
    <property type="entry name" value="IMS"/>
    <property type="match status" value="1"/>
</dbReference>
<dbReference type="Pfam" id="PF11799">
    <property type="entry name" value="IMS_C"/>
    <property type="match status" value="1"/>
</dbReference>
<dbReference type="Pfam" id="PF11798">
    <property type="entry name" value="IMS_HHH"/>
    <property type="match status" value="1"/>
</dbReference>
<dbReference type="SUPFAM" id="SSF56672">
    <property type="entry name" value="DNA/RNA polymerases"/>
    <property type="match status" value="1"/>
</dbReference>
<dbReference type="SUPFAM" id="SSF100879">
    <property type="entry name" value="Lesion bypass DNA polymerase (Y-family), little finger domain"/>
    <property type="match status" value="1"/>
</dbReference>
<dbReference type="PROSITE" id="PS50173">
    <property type="entry name" value="UMUC"/>
    <property type="match status" value="1"/>
</dbReference>
<feature type="chain" id="PRO_1000084954" description="DNA polymerase IV">
    <location>
        <begin position="1"/>
        <end position="364"/>
    </location>
</feature>
<feature type="domain" description="UmuC" evidence="1">
    <location>
        <begin position="14"/>
        <end position="198"/>
    </location>
</feature>
<feature type="active site" evidence="1">
    <location>
        <position position="117"/>
    </location>
</feature>
<feature type="binding site" evidence="1">
    <location>
        <position position="18"/>
    </location>
    <ligand>
        <name>Mg(2+)</name>
        <dbReference type="ChEBI" id="CHEBI:18420"/>
    </ligand>
</feature>
<feature type="binding site" evidence="1">
    <location>
        <position position="116"/>
    </location>
    <ligand>
        <name>Mg(2+)</name>
        <dbReference type="ChEBI" id="CHEBI:18420"/>
    </ligand>
</feature>
<feature type="site" description="Substrate discrimination" evidence="1">
    <location>
        <position position="23"/>
    </location>
</feature>
<name>DPO4_STRPB</name>
<accession>Q1JA16</accession>
<proteinExistence type="inferred from homology"/>
<keyword id="KW-0963">Cytoplasm</keyword>
<keyword id="KW-0227">DNA damage</keyword>
<keyword id="KW-0234">DNA repair</keyword>
<keyword id="KW-0235">DNA replication</keyword>
<keyword id="KW-0238">DNA-binding</keyword>
<keyword id="KW-0239">DNA-directed DNA polymerase</keyword>
<keyword id="KW-0460">Magnesium</keyword>
<keyword id="KW-0479">Metal-binding</keyword>
<keyword id="KW-0515">Mutator protein</keyword>
<keyword id="KW-0548">Nucleotidyltransferase</keyword>
<keyword id="KW-0808">Transferase</keyword>
<gene>
    <name evidence="1" type="primary">dinB</name>
    <name type="ordered locus">MGAS2096_Spy1593</name>
</gene>
<organism>
    <name type="scientific">Streptococcus pyogenes serotype M12 (strain MGAS2096)</name>
    <dbReference type="NCBI Taxonomy" id="370553"/>
    <lineage>
        <taxon>Bacteria</taxon>
        <taxon>Bacillati</taxon>
        <taxon>Bacillota</taxon>
        <taxon>Bacilli</taxon>
        <taxon>Lactobacillales</taxon>
        <taxon>Streptococcaceae</taxon>
        <taxon>Streptococcus</taxon>
    </lineage>
</organism>
<evidence type="ECO:0000255" key="1">
    <source>
        <dbReference type="HAMAP-Rule" id="MF_01113"/>
    </source>
</evidence>
<sequence length="364" mass="40790">MLIFPLINDTSRKIIHIDMDAFFAAVEERDNLALKGKPVVIGKDPRETGGRGVVSTCNYEARKYGIHSAMSSKEAYERCPKAIFISGNYEKYRTVGEQIRRIFKRYTDVVEPMSIDEAYLDVTNNKLGIKSAVKIAKLIQHDIWKEVGLTCSAGVSYNKFLAKLASDFEKPHGLTLVLKEDALCFLAKLPIEKFHGVGKKSVEKLHDMGIYTGQDLLAVPEMTLIDHFGRFGFDLYRKARGISNSPVKSDRIRKSIGSERTYAKLLYQETDIKAEISKNAKRVAALLQDHKKLGKTIVLKVRYADFTTLTKRVTLPELTRNAAQIEQVAGDIFDSLSENPAGIRLLGVTMTNLEDKVADISLDL</sequence>